<dbReference type="EMBL" id="CU928162">
    <property type="protein sequence ID" value="CAR10009.1"/>
    <property type="molecule type" value="Genomic_DNA"/>
</dbReference>
<dbReference type="RefSeq" id="WP_000907085.1">
    <property type="nucleotide sequence ID" value="NC_011745.1"/>
</dbReference>
<dbReference type="SMR" id="B7N0Z1"/>
<dbReference type="KEGG" id="ecq:ECED1_4017"/>
<dbReference type="HOGENOM" id="CLU_186759_1_0_6"/>
<dbReference type="Proteomes" id="UP000000748">
    <property type="component" value="Chromosome"/>
</dbReference>
<dbReference type="Gene3D" id="1.10.10.610">
    <property type="entry name" value="YehU-like"/>
    <property type="match status" value="1"/>
</dbReference>
<dbReference type="HAMAP" id="MF_00690">
    <property type="entry name" value="UPF0270"/>
    <property type="match status" value="1"/>
</dbReference>
<dbReference type="InterPro" id="IPR010648">
    <property type="entry name" value="UPF0270"/>
</dbReference>
<dbReference type="InterPro" id="IPR036685">
    <property type="entry name" value="YehU-like_sf"/>
</dbReference>
<dbReference type="NCBIfam" id="NF003438">
    <property type="entry name" value="PRK04966.1"/>
    <property type="match status" value="1"/>
</dbReference>
<dbReference type="Pfam" id="PF06794">
    <property type="entry name" value="UPF0270"/>
    <property type="match status" value="1"/>
</dbReference>
<dbReference type="PIRSF" id="PIRSF006169">
    <property type="entry name" value="UCP006169"/>
    <property type="match status" value="1"/>
</dbReference>
<dbReference type="SUPFAM" id="SSF118001">
    <property type="entry name" value="YehU-like"/>
    <property type="match status" value="1"/>
</dbReference>
<proteinExistence type="inferred from homology"/>
<evidence type="ECO:0000255" key="1">
    <source>
        <dbReference type="HAMAP-Rule" id="MF_00690"/>
    </source>
</evidence>
<name>YHEU_ECO81</name>
<organism>
    <name type="scientific">Escherichia coli O81 (strain ED1a)</name>
    <dbReference type="NCBI Taxonomy" id="585397"/>
    <lineage>
        <taxon>Bacteria</taxon>
        <taxon>Pseudomonadati</taxon>
        <taxon>Pseudomonadota</taxon>
        <taxon>Gammaproteobacteria</taxon>
        <taxon>Enterobacterales</taxon>
        <taxon>Enterobacteriaceae</taxon>
        <taxon>Escherichia</taxon>
    </lineage>
</organism>
<sequence length="72" mass="8470">MLIPWQDLSPETLENLIESFVLREGTDYGEHERTLEQKVADVKRQLQCGEAVLVWSELHETVNIMPRSQFRE</sequence>
<gene>
    <name evidence="1" type="primary">yheU</name>
    <name type="ordered locus">ECED1_4017</name>
</gene>
<feature type="chain" id="PRO_1000147811" description="UPF0270 protein YheU">
    <location>
        <begin position="1"/>
        <end position="72"/>
    </location>
</feature>
<accession>B7N0Z1</accession>
<comment type="similarity">
    <text evidence="1">Belongs to the UPF0270 family.</text>
</comment>
<protein>
    <recommendedName>
        <fullName evidence="1">UPF0270 protein YheU</fullName>
    </recommendedName>
</protein>
<reference key="1">
    <citation type="journal article" date="2009" name="PLoS Genet.">
        <title>Organised genome dynamics in the Escherichia coli species results in highly diverse adaptive paths.</title>
        <authorList>
            <person name="Touchon M."/>
            <person name="Hoede C."/>
            <person name="Tenaillon O."/>
            <person name="Barbe V."/>
            <person name="Baeriswyl S."/>
            <person name="Bidet P."/>
            <person name="Bingen E."/>
            <person name="Bonacorsi S."/>
            <person name="Bouchier C."/>
            <person name="Bouvet O."/>
            <person name="Calteau A."/>
            <person name="Chiapello H."/>
            <person name="Clermont O."/>
            <person name="Cruveiller S."/>
            <person name="Danchin A."/>
            <person name="Diard M."/>
            <person name="Dossat C."/>
            <person name="Karoui M.E."/>
            <person name="Frapy E."/>
            <person name="Garry L."/>
            <person name="Ghigo J.M."/>
            <person name="Gilles A.M."/>
            <person name="Johnson J."/>
            <person name="Le Bouguenec C."/>
            <person name="Lescat M."/>
            <person name="Mangenot S."/>
            <person name="Martinez-Jehanne V."/>
            <person name="Matic I."/>
            <person name="Nassif X."/>
            <person name="Oztas S."/>
            <person name="Petit M.A."/>
            <person name="Pichon C."/>
            <person name="Rouy Z."/>
            <person name="Ruf C.S."/>
            <person name="Schneider D."/>
            <person name="Tourret J."/>
            <person name="Vacherie B."/>
            <person name="Vallenet D."/>
            <person name="Medigue C."/>
            <person name="Rocha E.P.C."/>
            <person name="Denamur E."/>
        </authorList>
    </citation>
    <scope>NUCLEOTIDE SEQUENCE [LARGE SCALE GENOMIC DNA]</scope>
    <source>
        <strain>ED1a</strain>
    </source>
</reference>